<comment type="function">
    <text evidence="1">Required for maturation of urease via the functional incorporation of the urease nickel metallocenter.</text>
</comment>
<comment type="subunit">
    <text evidence="1">UreD, UreF and UreG form a complex that acts as a GTP-hydrolysis-dependent molecular chaperone, activating the urease apoprotein by helping to assemble the nickel containing metallocenter of UreC. The UreE protein probably delivers the nickel.</text>
</comment>
<comment type="subcellular location">
    <subcellularLocation>
        <location evidence="1">Cytoplasm</location>
    </subcellularLocation>
</comment>
<comment type="similarity">
    <text evidence="1">Belongs to the UreF family.</text>
</comment>
<reference key="1">
    <citation type="journal article" date="2007" name="PLoS Genet.">
        <title>Patterns and implications of gene gain and loss in the evolution of Prochlorococcus.</title>
        <authorList>
            <person name="Kettler G.C."/>
            <person name="Martiny A.C."/>
            <person name="Huang K."/>
            <person name="Zucker J."/>
            <person name="Coleman M.L."/>
            <person name="Rodrigue S."/>
            <person name="Chen F."/>
            <person name="Lapidus A."/>
            <person name="Ferriera S."/>
            <person name="Johnson J."/>
            <person name="Steglich C."/>
            <person name="Church G.M."/>
            <person name="Richardson P."/>
            <person name="Chisholm S.W."/>
        </authorList>
    </citation>
    <scope>NUCLEOTIDE SEQUENCE [LARGE SCALE GENOMIC DNA]</scope>
    <source>
        <strain>MIT 9301</strain>
    </source>
</reference>
<name>UREF_PROM0</name>
<evidence type="ECO:0000255" key="1">
    <source>
        <dbReference type="HAMAP-Rule" id="MF_01385"/>
    </source>
</evidence>
<proteinExistence type="inferred from homology"/>
<dbReference type="EMBL" id="CP000576">
    <property type="protein sequence ID" value="ABO17511.1"/>
    <property type="molecule type" value="Genomic_DNA"/>
</dbReference>
<dbReference type="RefSeq" id="WP_011862860.1">
    <property type="nucleotide sequence ID" value="NC_009091.1"/>
</dbReference>
<dbReference type="SMR" id="A3PCN6"/>
<dbReference type="STRING" id="167546.P9301_08881"/>
<dbReference type="KEGG" id="pmg:P9301_08881"/>
<dbReference type="eggNOG" id="COG0830">
    <property type="taxonomic scope" value="Bacteria"/>
</dbReference>
<dbReference type="HOGENOM" id="CLU_049215_2_1_3"/>
<dbReference type="OrthoDB" id="9798772at2"/>
<dbReference type="Proteomes" id="UP000001430">
    <property type="component" value="Chromosome"/>
</dbReference>
<dbReference type="GO" id="GO:0005737">
    <property type="term" value="C:cytoplasm"/>
    <property type="evidence" value="ECO:0007669"/>
    <property type="project" value="UniProtKB-SubCell"/>
</dbReference>
<dbReference type="GO" id="GO:0016151">
    <property type="term" value="F:nickel cation binding"/>
    <property type="evidence" value="ECO:0007669"/>
    <property type="project" value="UniProtKB-UniRule"/>
</dbReference>
<dbReference type="Gene3D" id="1.10.4190.10">
    <property type="entry name" value="Urease accessory protein UreF"/>
    <property type="match status" value="1"/>
</dbReference>
<dbReference type="HAMAP" id="MF_01385">
    <property type="entry name" value="UreF"/>
    <property type="match status" value="1"/>
</dbReference>
<dbReference type="InterPro" id="IPR002639">
    <property type="entry name" value="UreF"/>
</dbReference>
<dbReference type="InterPro" id="IPR038277">
    <property type="entry name" value="UreF_sf"/>
</dbReference>
<dbReference type="PANTHER" id="PTHR33620">
    <property type="entry name" value="UREASE ACCESSORY PROTEIN F"/>
    <property type="match status" value="1"/>
</dbReference>
<dbReference type="PANTHER" id="PTHR33620:SF1">
    <property type="entry name" value="UREASE ACCESSORY PROTEIN F"/>
    <property type="match status" value="1"/>
</dbReference>
<dbReference type="Pfam" id="PF01730">
    <property type="entry name" value="UreF"/>
    <property type="match status" value="1"/>
</dbReference>
<dbReference type="PIRSF" id="PIRSF009467">
    <property type="entry name" value="Ureas_acces_UreF"/>
    <property type="match status" value="1"/>
</dbReference>
<protein>
    <recommendedName>
        <fullName evidence="1">Urease accessory protein UreF</fullName>
    </recommendedName>
</protein>
<feature type="chain" id="PRO_1000145128" description="Urease accessory protein UreF">
    <location>
        <begin position="1"/>
        <end position="228"/>
    </location>
</feature>
<organism>
    <name type="scientific">Prochlorococcus marinus (strain MIT 9301)</name>
    <dbReference type="NCBI Taxonomy" id="167546"/>
    <lineage>
        <taxon>Bacteria</taxon>
        <taxon>Bacillati</taxon>
        <taxon>Cyanobacteriota</taxon>
        <taxon>Cyanophyceae</taxon>
        <taxon>Synechococcales</taxon>
        <taxon>Prochlorococcaceae</taxon>
        <taxon>Prochlorococcus</taxon>
    </lineage>
</organism>
<gene>
    <name evidence="1" type="primary">ureF</name>
    <name type="ordered locus">P9301_08881</name>
</gene>
<accession>A3PCN6</accession>
<keyword id="KW-0143">Chaperone</keyword>
<keyword id="KW-0963">Cytoplasm</keyword>
<keyword id="KW-0996">Nickel insertion</keyword>
<keyword id="KW-1185">Reference proteome</keyword>
<sequence>MSKSHLLKYLLISPNLPVGGFCYSEGMESFLHNKNLTDSNSVKELIISELEIGQIRLDARLLLDFFDIFNQINDRKNLKGNLQKLMSLDKWILSSKDSLEMREQQIQMAKSLFDLTKEFGFEYLYENDKKSSWSLAWSWACYCFEITKLEMVENFFYAWSANQLSAALRIIPIGSTKAQLIQRDLLAIISKVSKEIMDKEIDDLYFGNVGLAMAQQNHNDLYTKLFRN</sequence>